<accession>P52020</accession>
<accession>Q4V8L3</accession>
<sequence length="573" mass="64024">MWTFLGIATFTYFYKKCGDVTLANKELLLCVLVFLSLGLVLSYRCRHRNGGLLGRHQSGSQFAAFSDILSALPLIGFFWAKSPPESEKKEQLESKRRRKEVNLSETTLTGAATSVSTSSVTDPEVIIIGSGVLGSALATVLSRDGRTVTVIERDLKEPDRILGECLQPGGYRVLRELGLGDTVESLNAHHIHGYVIHDCESRSEVQIPYPVSENNQVQSGVAFHHGKFIMSLRKAAMAEPNVKFIEGVVLRLLEEDDAVIGVQYKDKETGDTKELHAPLTVVADGLFSKFRKNLISNKVSVSSHFVGFIMKDAPQFKANFAELVLVDPSPVLIYQISPSETRVLVDIRGELPRNLREYMTEQIYPQIPDHLKESFLEACQNARLRTMPASFLPPSSVNKRGVLLLGDAYNLRHPLTGGGMTVALKDIKIWRQLLKDIPDLYDDAAIFQAKKSFFWSRKRSHSFVVNVLAQALYELFSATDDSLRQLRKACFLYFKLGGECLTGPVGLLSILSPDPLLLIRHFFSVAVYATYFCFKSEPWATKPRALFSSGAILYKACSIIFPLIYSEMKYLVH</sequence>
<gene>
    <name type="primary">Sqle</name>
    <name type="synonym">Erg1</name>
</gene>
<protein>
    <recommendedName>
        <fullName>Squalene monooxygenase</fullName>
        <ecNumber evidence="2 3">1.14.14.17</ecNumber>
    </recommendedName>
    <alternativeName>
        <fullName evidence="4">Squalene epoxidase</fullName>
        <shortName evidence="4">SE</shortName>
    </alternativeName>
</protein>
<proteinExistence type="evidence at protein level"/>
<organism>
    <name type="scientific">Rattus norvegicus</name>
    <name type="common">Rat</name>
    <dbReference type="NCBI Taxonomy" id="10116"/>
    <lineage>
        <taxon>Eukaryota</taxon>
        <taxon>Metazoa</taxon>
        <taxon>Chordata</taxon>
        <taxon>Craniata</taxon>
        <taxon>Vertebrata</taxon>
        <taxon>Euteleostomi</taxon>
        <taxon>Mammalia</taxon>
        <taxon>Eutheria</taxon>
        <taxon>Euarchontoglires</taxon>
        <taxon>Glires</taxon>
        <taxon>Rodentia</taxon>
        <taxon>Myomorpha</taxon>
        <taxon>Muroidea</taxon>
        <taxon>Muridae</taxon>
        <taxon>Murinae</taxon>
        <taxon>Rattus</taxon>
    </lineage>
</organism>
<keyword id="KW-0256">Endoplasmic reticulum</keyword>
<keyword id="KW-0274">FAD</keyword>
<keyword id="KW-0285">Flavoprotein</keyword>
<keyword id="KW-0443">Lipid metabolism</keyword>
<keyword id="KW-0472">Membrane</keyword>
<keyword id="KW-0492">Microsome</keyword>
<keyword id="KW-0560">Oxidoreductase</keyword>
<keyword id="KW-1185">Reference proteome</keyword>
<keyword id="KW-0832">Ubl conjugation</keyword>
<feature type="chain" id="PRO_0000209840" description="Squalene monooxygenase">
    <location>
        <begin position="1"/>
        <end position="573"/>
    </location>
</feature>
<feature type="topological domain" description="Cytoplasmic" evidence="1">
    <location>
        <begin position="1"/>
        <end position="19"/>
    </location>
</feature>
<feature type="intramembrane region" evidence="1">
    <location>
        <begin position="20"/>
        <end position="40"/>
    </location>
</feature>
<feature type="topological domain" description="Cytoplasmic" evidence="1">
    <location>
        <begin position="41"/>
        <end position="573"/>
    </location>
</feature>
<feature type="region of interest" description="Interaction with MARCHF6" evidence="1">
    <location>
        <begin position="1"/>
        <end position="99"/>
    </location>
</feature>
<feature type="region of interest" description="Required for degradation in response to high membrane cholesterol levels" evidence="1">
    <location>
        <begin position="61"/>
        <end position="72"/>
    </location>
</feature>
<feature type="region of interest" description="Sufficient for catalytic activity" evidence="2 3">
    <location>
        <begin position="100"/>
        <end position="573"/>
    </location>
</feature>
<feature type="region of interest" description="Hydrophobic; mediates interaction with membranes" evidence="1">
    <location>
        <begin position="515"/>
        <end position="573"/>
    </location>
</feature>
<feature type="binding site" evidence="1">
    <location>
        <begin position="132"/>
        <end position="133"/>
    </location>
    <ligand>
        <name>FAD</name>
        <dbReference type="ChEBI" id="CHEBI:57692"/>
    </ligand>
</feature>
<feature type="binding site" evidence="1">
    <location>
        <begin position="152"/>
        <end position="153"/>
    </location>
    <ligand>
        <name>FAD</name>
        <dbReference type="ChEBI" id="CHEBI:57692"/>
    </ligand>
</feature>
<feature type="binding site" evidence="1">
    <location>
        <position position="160"/>
    </location>
    <ligand>
        <name>FAD</name>
        <dbReference type="ChEBI" id="CHEBI:57692"/>
    </ligand>
</feature>
<feature type="binding site" evidence="1">
    <location>
        <position position="233"/>
    </location>
    <ligand>
        <name>FAD</name>
        <dbReference type="ChEBI" id="CHEBI:57692"/>
    </ligand>
</feature>
<feature type="binding site" evidence="1">
    <location>
        <position position="249"/>
    </location>
    <ligand>
        <name>FAD</name>
        <dbReference type="ChEBI" id="CHEBI:57692"/>
    </ligand>
</feature>
<feature type="binding site" evidence="1">
    <location>
        <position position="407"/>
    </location>
    <ligand>
        <name>FAD</name>
        <dbReference type="ChEBI" id="CHEBI:57692"/>
    </ligand>
</feature>
<feature type="binding site" evidence="1">
    <location>
        <position position="420"/>
    </location>
    <ligand>
        <name>FAD</name>
        <dbReference type="ChEBI" id="CHEBI:57692"/>
    </ligand>
</feature>
<feature type="site" description="Important for enzyme activity" evidence="1">
    <location>
        <position position="194"/>
    </location>
</feature>
<feature type="mutagenesis site" description="Strongly decreased catalytic activity." evidence="2">
    <original>Y</original>
    <variation>A</variation>
    <location>
        <position position="194"/>
    </location>
</feature>
<feature type="mutagenesis site" description="Nearly abolishes catalytic activity." evidence="2">
    <original>Y</original>
    <variation>A</variation>
    <location>
        <position position="209"/>
    </location>
</feature>
<feature type="mutagenesis site" description="Increased enzyme activity." evidence="2">
    <original>F</original>
    <variation>A</variation>
    <location>
        <position position="223"/>
    </location>
</feature>
<feature type="mutagenesis site" description="Strongly decreased affinity for squalene." evidence="2">
    <original>F</original>
    <variation>A</variation>
    <location>
        <position position="228"/>
    </location>
</feature>
<feature type="mutagenesis site" description="Decreased enzyme activity." evidence="2">
    <original>F</original>
    <variation>A</variation>
    <location>
        <position position="287"/>
    </location>
</feature>
<feature type="mutagenesis site" description="Decreased enzyme activity." evidence="2">
    <original>F</original>
    <variation>A</variation>
    <location>
        <position position="305"/>
    </location>
</feature>
<feature type="mutagenesis site" description="Decreased enzyme activity." evidence="2">
    <original>Y</original>
    <variation>A</variation>
    <location>
        <position position="334"/>
    </location>
</feature>
<feature type="mutagenesis site" description="Nearly abolishes enzyme activity." evidence="2">
    <original>Y</original>
    <variation>A</variation>
    <location>
        <position position="473"/>
    </location>
</feature>
<feature type="mutagenesis site" description="Decreased enzyme activity." evidence="2">
    <original>F</original>
    <variation>A</variation>
    <location>
        <position position="476"/>
    </location>
</feature>
<feature type="mutagenesis site" description="Decreased enzyme activity." evidence="2">
    <original>F</original>
    <variation>A</variation>
    <location>
        <position position="491"/>
    </location>
</feature>
<feature type="mutagenesis site" description="Decreased enzyme activity." evidence="2">
    <original>F</original>
    <variation>A</variation>
    <location>
        <position position="522"/>
    </location>
</feature>
<feature type="mutagenesis site" description="Decreased enzyme activity." evidence="2">
    <original>F</original>
    <variation>A</variation>
    <location>
        <position position="523"/>
    </location>
</feature>
<feature type="mutagenesis site" description="Decreased enzyme activity." evidence="2">
    <original>Y</original>
    <variation>A</variation>
    <location>
        <position position="528"/>
    </location>
</feature>
<comment type="function">
    <text evidence="2 3">Catalyzes the stereospecific oxidation of squalene to (S)-2,3-epoxysqualene, and is considered to be a rate-limiting enzyme in steroid biosynthesis.</text>
</comment>
<comment type="catalytic activity">
    <reaction evidence="2 3">
        <text>squalene + reduced [NADPH--hemoprotein reductase] + O2 = (S)-2,3-epoxysqualene + oxidized [NADPH--hemoprotein reductase] + H2O + H(+)</text>
        <dbReference type="Rhea" id="RHEA:25282"/>
        <dbReference type="Rhea" id="RHEA-COMP:11964"/>
        <dbReference type="Rhea" id="RHEA-COMP:11965"/>
        <dbReference type="ChEBI" id="CHEBI:15377"/>
        <dbReference type="ChEBI" id="CHEBI:15378"/>
        <dbReference type="ChEBI" id="CHEBI:15379"/>
        <dbReference type="ChEBI" id="CHEBI:15440"/>
        <dbReference type="ChEBI" id="CHEBI:15441"/>
        <dbReference type="ChEBI" id="CHEBI:57618"/>
        <dbReference type="ChEBI" id="CHEBI:58210"/>
        <dbReference type="EC" id="1.14.14.17"/>
    </reaction>
</comment>
<comment type="cofactor">
    <cofactor evidence="2">
        <name>FAD</name>
        <dbReference type="ChEBI" id="CHEBI:57692"/>
    </cofactor>
</comment>
<comment type="activity regulation">
    <text evidence="3">Inhibited by NB-598 ((E)N-ethyl-N-(6,6-dimethyl-2-hepten-4-ynyl)-3-[(3,3'-bi-thiophen-5-yl)methoxy]benzene-methanamine). Contrary to fungal enzymes, the mammalian enzyme is only slightly inhibited by terbinafine.</text>
</comment>
<comment type="biophysicochemical properties">
    <kinetics>
        <KM evidence="2">9.87 uM for squalene</KM>
    </kinetics>
</comment>
<comment type="pathway">
    <text evidence="6">Terpene metabolism; lanosterol biosynthesis; lanosterol from farnesyl diphosphate: step 2/3.</text>
</comment>
<comment type="subunit">
    <text evidence="1">Interacts (via N-terminal domain) with MARCHF6. Interacts with SMIM22; this interaction modulates lipid droplet formation.</text>
</comment>
<comment type="subcellular location">
    <subcellularLocation>
        <location evidence="3">Microsome membrane</location>
        <topology evidence="1">Peripheral membrane protein</topology>
    </subcellularLocation>
    <subcellularLocation>
        <location>Endoplasmic reticulum membrane</location>
        <topology evidence="1">Peripheral membrane protein</topology>
    </subcellularLocation>
</comment>
<comment type="tissue specificity">
    <text evidence="3">Detected in lever (at protein level).</text>
</comment>
<comment type="domain">
    <text evidence="1">The C-terminal hydrophobic region contains two helices that mediate interaction with membranes. Contrary to predictions, this region does not contain transmembrane helices.</text>
</comment>
<comment type="domain">
    <text evidence="1">The N-terminal region mediates interaction with MARCHF6, leading to SQLE ubiquitination and proteasomal degradation when cholosterol levels are high. The first part of the N-terminal region contains a hydrophobic region that inserts into the membrane; contrary to predictions, there are no transmembrane helices. The second part contains a region that can form an amphipathic region that associates with membranes. This region is ejected from the membrane by high cholesterol levels and becomes disordered in an aqueous environment. This is critical for cholesterol-dependent proteasomal degradation. Additional parts of the N-terminal region are predicted to be disordered and contribute to flagging the protein for proteasomal degradation already under basal conditions.</text>
</comment>
<comment type="PTM">
    <text evidence="1">Ubiquitinated by MARCHF6 in response to high cholesterol levels in intracellular membranes, leading to proteasomal degradation.</text>
</comment>
<comment type="similarity">
    <text evidence="5">Belongs to the squalene monooxygenase family.</text>
</comment>
<name>ERG1_RAT</name>
<reference key="1">
    <citation type="journal article" date="1995" name="J. Biol. Chem.">
        <title>Molecular cloning and expression of rat squalene epoxidase.</title>
        <authorList>
            <person name="Sakakibara J."/>
            <person name="Watanabe R."/>
            <person name="Kanai Y."/>
            <person name="Ono T."/>
        </authorList>
    </citation>
    <scope>NUCLEOTIDE SEQUENCE [MRNA]</scope>
    <scope>FUNCTION</scope>
    <scope>CATALYTIC ACTIVITY</scope>
    <scope>PATHWAY</scope>
    <scope>ACTIVITY REGULATION</scope>
    <scope>SUBCELLULAR LOCATION</scope>
    <scope>TISSUE SPECIFICITY</scope>
    <source>
        <tissue>Kidney</tissue>
    </source>
</reference>
<reference key="2">
    <citation type="journal article" date="2004" name="Genome Res.">
        <title>The status, quality, and expansion of the NIH full-length cDNA project: the Mammalian Gene Collection (MGC).</title>
        <authorList>
            <consortium name="The MGC Project Team"/>
        </authorList>
    </citation>
    <scope>NUCLEOTIDE SEQUENCE [LARGE SCALE MRNA]</scope>
    <source>
        <tissue>Placenta</tissue>
    </source>
</reference>
<reference key="3">
    <citation type="journal article" date="2007" name="Biochem. Biophys. Res. Commun.">
        <title>Site-directed mutagenesis of conserved aromatic residues in rat squalene epoxidase.</title>
        <authorList>
            <person name="Abe I."/>
            <person name="Abe T."/>
            <person name="Lou W."/>
            <person name="Masuoka T."/>
            <person name="Noguchi H."/>
        </authorList>
    </citation>
    <scope>FUNCTION</scope>
    <scope>CATALYTIC ACTIVITY</scope>
    <scope>COFACTOR</scope>
    <scope>BIOPHYSICOCHEMICAL PROPERTIES</scope>
    <scope>MUTAGENESIS OF TYR-194; TYR-209; PHE-223; PHE-228; PHE-287; PHE-305; TYR-334; TYR-473; PHE-476; PHE-491; PHE-522; PHE-523 AND TYR-528</scope>
</reference>
<evidence type="ECO:0000250" key="1">
    <source>
        <dbReference type="UniProtKB" id="Q14534"/>
    </source>
</evidence>
<evidence type="ECO:0000269" key="2">
    <source>
    </source>
</evidence>
<evidence type="ECO:0000269" key="3">
    <source>
    </source>
</evidence>
<evidence type="ECO:0000303" key="4">
    <source>
    </source>
</evidence>
<evidence type="ECO:0000305" key="5"/>
<evidence type="ECO:0000305" key="6">
    <source>
    </source>
</evidence>
<dbReference type="EC" id="1.14.14.17" evidence="2 3"/>
<dbReference type="EMBL" id="D37920">
    <property type="protein sequence ID" value="BAA07141.1"/>
    <property type="molecule type" value="mRNA"/>
</dbReference>
<dbReference type="EMBL" id="BC097330">
    <property type="protein sequence ID" value="AAH97330.1"/>
    <property type="molecule type" value="mRNA"/>
</dbReference>
<dbReference type="PIR" id="A55767">
    <property type="entry name" value="A55767"/>
</dbReference>
<dbReference type="RefSeq" id="NP_058832.1">
    <property type="nucleotide sequence ID" value="NM_017136.2"/>
</dbReference>
<dbReference type="SMR" id="P52020"/>
<dbReference type="FunCoup" id="P52020">
    <property type="interactions" value="318"/>
</dbReference>
<dbReference type="STRING" id="10116.ENSRNOP00000012883"/>
<dbReference type="BindingDB" id="P52020"/>
<dbReference type="ChEMBL" id="CHEMBL4241"/>
<dbReference type="DrugCentral" id="P52020"/>
<dbReference type="GlyGen" id="P52020">
    <property type="glycosylation" value="4 sites"/>
</dbReference>
<dbReference type="PhosphoSitePlus" id="P52020"/>
<dbReference type="jPOST" id="P52020"/>
<dbReference type="PaxDb" id="10116-ENSRNOP00000012883"/>
<dbReference type="Ensembl" id="ENSRNOT00000012883.5">
    <property type="protein sequence ID" value="ENSRNOP00000012883.2"/>
    <property type="gene ID" value="ENSRNOG00000009550.8"/>
</dbReference>
<dbReference type="GeneID" id="29230"/>
<dbReference type="KEGG" id="rno:29230"/>
<dbReference type="UCSC" id="RGD:3755">
    <property type="organism name" value="rat"/>
</dbReference>
<dbReference type="AGR" id="RGD:3755"/>
<dbReference type="CTD" id="6713"/>
<dbReference type="RGD" id="3755">
    <property type="gene designation" value="Sqle"/>
</dbReference>
<dbReference type="eggNOG" id="KOG1298">
    <property type="taxonomic scope" value="Eukaryota"/>
</dbReference>
<dbReference type="GeneTree" id="ENSGT00390000011759"/>
<dbReference type="HOGENOM" id="CLU_026390_0_0_1"/>
<dbReference type="InParanoid" id="P52020"/>
<dbReference type="OMA" id="AKRTFYW"/>
<dbReference type="OrthoDB" id="37419at9989"/>
<dbReference type="PhylomeDB" id="P52020"/>
<dbReference type="TreeFam" id="TF331056"/>
<dbReference type="Reactome" id="R-RNO-191273">
    <property type="pathway name" value="Cholesterol biosynthesis"/>
</dbReference>
<dbReference type="SABIO-RK" id="P52020"/>
<dbReference type="UniPathway" id="UPA00767">
    <property type="reaction ID" value="UER00752"/>
</dbReference>
<dbReference type="PRO" id="PR:P52020"/>
<dbReference type="Proteomes" id="UP000002494">
    <property type="component" value="Chromosome 7"/>
</dbReference>
<dbReference type="Bgee" id="ENSRNOG00000009550">
    <property type="expression patterns" value="Expressed in duodenum and 20 other cell types or tissues"/>
</dbReference>
<dbReference type="GO" id="GO:0005783">
    <property type="term" value="C:endoplasmic reticulum"/>
    <property type="evidence" value="ECO:0000318"/>
    <property type="project" value="GO_Central"/>
</dbReference>
<dbReference type="GO" id="GO:0005789">
    <property type="term" value="C:endoplasmic reticulum membrane"/>
    <property type="evidence" value="ECO:0007669"/>
    <property type="project" value="UniProtKB-SubCell"/>
</dbReference>
<dbReference type="GO" id="GO:0043231">
    <property type="term" value="C:intracellular membrane-bounded organelle"/>
    <property type="evidence" value="ECO:0000266"/>
    <property type="project" value="RGD"/>
</dbReference>
<dbReference type="GO" id="GO:0016020">
    <property type="term" value="C:membrane"/>
    <property type="evidence" value="ECO:0000250"/>
    <property type="project" value="UniProtKB"/>
</dbReference>
<dbReference type="GO" id="GO:0071949">
    <property type="term" value="F:FAD binding"/>
    <property type="evidence" value="ECO:0000250"/>
    <property type="project" value="UniProtKB"/>
</dbReference>
<dbReference type="GO" id="GO:0004506">
    <property type="term" value="F:squalene monooxygenase activity"/>
    <property type="evidence" value="ECO:0000314"/>
    <property type="project" value="RGD"/>
</dbReference>
<dbReference type="GO" id="GO:0008203">
    <property type="term" value="P:cholesterol metabolic process"/>
    <property type="evidence" value="ECO:0000315"/>
    <property type="project" value="RGD"/>
</dbReference>
<dbReference type="GO" id="GO:0140042">
    <property type="term" value="P:lipid droplet formation"/>
    <property type="evidence" value="ECO:0000250"/>
    <property type="project" value="UniProtKB"/>
</dbReference>
<dbReference type="GO" id="GO:0042127">
    <property type="term" value="P:regulation of cell population proliferation"/>
    <property type="evidence" value="ECO:0000250"/>
    <property type="project" value="UniProtKB"/>
</dbReference>
<dbReference type="GO" id="GO:1904614">
    <property type="term" value="P:response to biphenyl"/>
    <property type="evidence" value="ECO:0000314"/>
    <property type="project" value="RGD"/>
</dbReference>
<dbReference type="GO" id="GO:0016126">
    <property type="term" value="P:sterol biosynthetic process"/>
    <property type="evidence" value="ECO:0000250"/>
    <property type="project" value="UniProtKB"/>
</dbReference>
<dbReference type="FunFam" id="3.50.50.60:FF:000104">
    <property type="entry name" value="Squalene monooxygenase"/>
    <property type="match status" value="1"/>
</dbReference>
<dbReference type="Gene3D" id="3.50.50.60">
    <property type="entry name" value="FAD/NAD(P)-binding domain"/>
    <property type="match status" value="1"/>
</dbReference>
<dbReference type="InterPro" id="IPR036188">
    <property type="entry name" value="FAD/NAD-bd_sf"/>
</dbReference>
<dbReference type="InterPro" id="IPR013698">
    <property type="entry name" value="Squalene_epoxidase"/>
</dbReference>
<dbReference type="InterPro" id="IPR040125">
    <property type="entry name" value="Squalene_monox"/>
</dbReference>
<dbReference type="PANTHER" id="PTHR10835">
    <property type="entry name" value="SQUALENE MONOOXYGENASE"/>
    <property type="match status" value="1"/>
</dbReference>
<dbReference type="PANTHER" id="PTHR10835:SF0">
    <property type="entry name" value="SQUALENE MONOOXYGENASE"/>
    <property type="match status" value="1"/>
</dbReference>
<dbReference type="Pfam" id="PF08491">
    <property type="entry name" value="SE"/>
    <property type="match status" value="1"/>
</dbReference>
<dbReference type="PRINTS" id="PR00420">
    <property type="entry name" value="RNGMNOXGNASE"/>
</dbReference>
<dbReference type="SUPFAM" id="SSF51905">
    <property type="entry name" value="FAD/NAD(P)-binding domain"/>
    <property type="match status" value="1"/>
</dbReference>